<dbReference type="EC" id="3.1.26.4" evidence="1"/>
<dbReference type="EMBL" id="CP000553">
    <property type="protein sequence ID" value="ABM74840.1"/>
    <property type="molecule type" value="Genomic_DNA"/>
</dbReference>
<dbReference type="RefSeq" id="WP_011823057.1">
    <property type="nucleotide sequence ID" value="NC_008819.1"/>
</dbReference>
<dbReference type="SMR" id="A2C030"/>
<dbReference type="KEGG" id="pme:NATL1_02761"/>
<dbReference type="eggNOG" id="COG0328">
    <property type="taxonomic scope" value="Bacteria"/>
</dbReference>
<dbReference type="HOGENOM" id="CLU_030894_6_1_3"/>
<dbReference type="Proteomes" id="UP000002592">
    <property type="component" value="Chromosome"/>
</dbReference>
<dbReference type="GO" id="GO:0005737">
    <property type="term" value="C:cytoplasm"/>
    <property type="evidence" value="ECO:0007669"/>
    <property type="project" value="UniProtKB-SubCell"/>
</dbReference>
<dbReference type="GO" id="GO:0000287">
    <property type="term" value="F:magnesium ion binding"/>
    <property type="evidence" value="ECO:0007669"/>
    <property type="project" value="UniProtKB-UniRule"/>
</dbReference>
<dbReference type="GO" id="GO:0003676">
    <property type="term" value="F:nucleic acid binding"/>
    <property type="evidence" value="ECO:0007669"/>
    <property type="project" value="InterPro"/>
</dbReference>
<dbReference type="GO" id="GO:0004523">
    <property type="term" value="F:RNA-DNA hybrid ribonuclease activity"/>
    <property type="evidence" value="ECO:0007669"/>
    <property type="project" value="UniProtKB-UniRule"/>
</dbReference>
<dbReference type="GO" id="GO:0043137">
    <property type="term" value="P:DNA replication, removal of RNA primer"/>
    <property type="evidence" value="ECO:0007669"/>
    <property type="project" value="TreeGrafter"/>
</dbReference>
<dbReference type="CDD" id="cd09278">
    <property type="entry name" value="RNase_HI_prokaryote_like"/>
    <property type="match status" value="1"/>
</dbReference>
<dbReference type="Gene3D" id="3.30.420.10">
    <property type="entry name" value="Ribonuclease H-like superfamily/Ribonuclease H"/>
    <property type="match status" value="1"/>
</dbReference>
<dbReference type="HAMAP" id="MF_00042">
    <property type="entry name" value="RNase_H"/>
    <property type="match status" value="1"/>
</dbReference>
<dbReference type="InterPro" id="IPR050092">
    <property type="entry name" value="RNase_H"/>
</dbReference>
<dbReference type="InterPro" id="IPR012337">
    <property type="entry name" value="RNaseH-like_sf"/>
</dbReference>
<dbReference type="InterPro" id="IPR002156">
    <property type="entry name" value="RNaseH_domain"/>
</dbReference>
<dbReference type="InterPro" id="IPR036397">
    <property type="entry name" value="RNaseH_sf"/>
</dbReference>
<dbReference type="InterPro" id="IPR022892">
    <property type="entry name" value="RNaseHI"/>
</dbReference>
<dbReference type="PANTHER" id="PTHR10642">
    <property type="entry name" value="RIBONUCLEASE H1"/>
    <property type="match status" value="1"/>
</dbReference>
<dbReference type="PANTHER" id="PTHR10642:SF26">
    <property type="entry name" value="RIBONUCLEASE H1"/>
    <property type="match status" value="1"/>
</dbReference>
<dbReference type="Pfam" id="PF00075">
    <property type="entry name" value="RNase_H"/>
    <property type="match status" value="1"/>
</dbReference>
<dbReference type="SUPFAM" id="SSF53098">
    <property type="entry name" value="Ribonuclease H-like"/>
    <property type="match status" value="1"/>
</dbReference>
<dbReference type="PROSITE" id="PS50879">
    <property type="entry name" value="RNASE_H_1"/>
    <property type="match status" value="1"/>
</dbReference>
<comment type="function">
    <text evidence="1">Endonuclease that specifically degrades the RNA of RNA-DNA hybrids.</text>
</comment>
<comment type="catalytic activity">
    <reaction evidence="1">
        <text>Endonucleolytic cleavage to 5'-phosphomonoester.</text>
        <dbReference type="EC" id="3.1.26.4"/>
    </reaction>
</comment>
<comment type="cofactor">
    <cofactor evidence="1">
        <name>Mg(2+)</name>
        <dbReference type="ChEBI" id="CHEBI:18420"/>
    </cofactor>
    <text evidence="1">Binds 1 Mg(2+) ion per subunit. May bind a second metal ion at a regulatory site, or after substrate binding.</text>
</comment>
<comment type="subunit">
    <text evidence="1">Monomer.</text>
</comment>
<comment type="subcellular location">
    <subcellularLocation>
        <location evidence="1">Cytoplasm</location>
    </subcellularLocation>
</comment>
<comment type="similarity">
    <text evidence="1">Belongs to the RNase H family.</text>
</comment>
<name>RNH_PROM1</name>
<feature type="chain" id="PRO_0000332650" description="Ribonuclease H">
    <location>
        <begin position="1"/>
        <end position="161"/>
    </location>
</feature>
<feature type="domain" description="RNase H type-1" evidence="2">
    <location>
        <begin position="5"/>
        <end position="149"/>
    </location>
</feature>
<feature type="binding site" evidence="1">
    <location>
        <position position="14"/>
    </location>
    <ligand>
        <name>Mg(2+)</name>
        <dbReference type="ChEBI" id="CHEBI:18420"/>
        <label>1</label>
    </ligand>
</feature>
<feature type="binding site" evidence="1">
    <location>
        <position position="14"/>
    </location>
    <ligand>
        <name>Mg(2+)</name>
        <dbReference type="ChEBI" id="CHEBI:18420"/>
        <label>2</label>
    </ligand>
</feature>
<feature type="binding site" evidence="1">
    <location>
        <position position="53"/>
    </location>
    <ligand>
        <name>Mg(2+)</name>
        <dbReference type="ChEBI" id="CHEBI:18420"/>
        <label>1</label>
    </ligand>
</feature>
<feature type="binding site" evidence="1">
    <location>
        <position position="78"/>
    </location>
    <ligand>
        <name>Mg(2+)</name>
        <dbReference type="ChEBI" id="CHEBI:18420"/>
        <label>1</label>
    </ligand>
</feature>
<feature type="binding site" evidence="1">
    <location>
        <position position="141"/>
    </location>
    <ligand>
        <name>Mg(2+)</name>
        <dbReference type="ChEBI" id="CHEBI:18420"/>
        <label>2</label>
    </ligand>
</feature>
<evidence type="ECO:0000255" key="1">
    <source>
        <dbReference type="HAMAP-Rule" id="MF_00042"/>
    </source>
</evidence>
<evidence type="ECO:0000255" key="2">
    <source>
        <dbReference type="PROSITE-ProRule" id="PRU00408"/>
    </source>
</evidence>
<proteinExistence type="inferred from homology"/>
<sequence length="161" mass="17803">MSKEEKLAIAAATDGACSGNPGPGGWGALIRFQDGSEIEFGGNSPETTNNRMELQAALFILEKLKNIEFAPSLTIKTDSKYLIDGMEKWMPNWKKKGWKTASGKPVLNQDLWKALDHPELPKIKLQYVKGHSGEKDNDRVDAIAVAFSKGRKIQLKDFANN</sequence>
<keyword id="KW-0963">Cytoplasm</keyword>
<keyword id="KW-0255">Endonuclease</keyword>
<keyword id="KW-0378">Hydrolase</keyword>
<keyword id="KW-0460">Magnesium</keyword>
<keyword id="KW-0479">Metal-binding</keyword>
<keyword id="KW-0540">Nuclease</keyword>
<protein>
    <recommendedName>
        <fullName evidence="1">Ribonuclease H</fullName>
        <shortName evidence="1">RNase H</shortName>
        <ecNumber evidence="1">3.1.26.4</ecNumber>
    </recommendedName>
</protein>
<reference key="1">
    <citation type="journal article" date="2007" name="PLoS Genet.">
        <title>Patterns and implications of gene gain and loss in the evolution of Prochlorococcus.</title>
        <authorList>
            <person name="Kettler G.C."/>
            <person name="Martiny A.C."/>
            <person name="Huang K."/>
            <person name="Zucker J."/>
            <person name="Coleman M.L."/>
            <person name="Rodrigue S."/>
            <person name="Chen F."/>
            <person name="Lapidus A."/>
            <person name="Ferriera S."/>
            <person name="Johnson J."/>
            <person name="Steglich C."/>
            <person name="Church G.M."/>
            <person name="Richardson P."/>
            <person name="Chisholm S.W."/>
        </authorList>
    </citation>
    <scope>NUCLEOTIDE SEQUENCE [LARGE SCALE GENOMIC DNA]</scope>
    <source>
        <strain>NATL1A</strain>
    </source>
</reference>
<organism>
    <name type="scientific">Prochlorococcus marinus (strain NATL1A)</name>
    <dbReference type="NCBI Taxonomy" id="167555"/>
    <lineage>
        <taxon>Bacteria</taxon>
        <taxon>Bacillati</taxon>
        <taxon>Cyanobacteriota</taxon>
        <taxon>Cyanophyceae</taxon>
        <taxon>Synechococcales</taxon>
        <taxon>Prochlorococcaceae</taxon>
        <taxon>Prochlorococcus</taxon>
    </lineage>
</organism>
<gene>
    <name evidence="1" type="primary">rnhA</name>
    <name type="ordered locus">NATL1_02761</name>
</gene>
<accession>A2C030</accession>